<evidence type="ECO:0000255" key="1">
    <source>
        <dbReference type="HAMAP-Rule" id="MF_00193"/>
    </source>
</evidence>
<evidence type="ECO:0000305" key="2"/>
<name>NADE_TROWT</name>
<protein>
    <recommendedName>
        <fullName evidence="1">NH(3)-dependent NAD(+) synthetase</fullName>
        <ecNumber evidence="1">6.3.1.5</ecNumber>
    </recommendedName>
</protein>
<organism>
    <name type="scientific">Tropheryma whipplei (strain Twist)</name>
    <name type="common">Whipple's bacillus</name>
    <dbReference type="NCBI Taxonomy" id="203267"/>
    <lineage>
        <taxon>Bacteria</taxon>
        <taxon>Bacillati</taxon>
        <taxon>Actinomycetota</taxon>
        <taxon>Actinomycetes</taxon>
        <taxon>Micrococcales</taxon>
        <taxon>Tropherymataceae</taxon>
        <taxon>Tropheryma</taxon>
    </lineage>
</organism>
<reference key="1">
    <citation type="journal article" date="2003" name="Genome Res.">
        <title>Tropheryma whipplei twist: a human pathogenic Actinobacteria with a reduced genome.</title>
        <authorList>
            <person name="Raoult D."/>
            <person name="Ogata H."/>
            <person name="Audic S."/>
            <person name="Robert C."/>
            <person name="Suhre K."/>
            <person name="Drancourt M."/>
            <person name="Claverie J.-M."/>
        </authorList>
    </citation>
    <scope>NUCLEOTIDE SEQUENCE [LARGE SCALE GENOMIC DNA]</scope>
    <source>
        <strain>Twist</strain>
    </source>
</reference>
<gene>
    <name evidence="1" type="primary">nadE</name>
    <name type="ordered locus">TWT_405</name>
</gene>
<comment type="function">
    <text evidence="1">Catalyzes the ATP-dependent amidation of deamido-NAD to form NAD. Uses ammonia as a nitrogen source.</text>
</comment>
<comment type="catalytic activity">
    <reaction evidence="1">
        <text>deamido-NAD(+) + NH4(+) + ATP = AMP + diphosphate + NAD(+) + H(+)</text>
        <dbReference type="Rhea" id="RHEA:21188"/>
        <dbReference type="ChEBI" id="CHEBI:15378"/>
        <dbReference type="ChEBI" id="CHEBI:28938"/>
        <dbReference type="ChEBI" id="CHEBI:30616"/>
        <dbReference type="ChEBI" id="CHEBI:33019"/>
        <dbReference type="ChEBI" id="CHEBI:57540"/>
        <dbReference type="ChEBI" id="CHEBI:58437"/>
        <dbReference type="ChEBI" id="CHEBI:456215"/>
        <dbReference type="EC" id="6.3.1.5"/>
    </reaction>
</comment>
<comment type="pathway">
    <text evidence="1">Cofactor biosynthesis; NAD(+) biosynthesis; NAD(+) from deamido-NAD(+) (ammonia route): step 1/1.</text>
</comment>
<comment type="subunit">
    <text evidence="1">Homodimer.</text>
</comment>
<comment type="similarity">
    <text evidence="1">Belongs to the NAD synthetase family.</text>
</comment>
<comment type="sequence caution" evidence="2">
    <conflict type="erroneous initiation">
        <sequence resource="EMBL-CDS" id="AAO44502"/>
    </conflict>
</comment>
<dbReference type="EC" id="6.3.1.5" evidence="1"/>
<dbReference type="EMBL" id="AE014184">
    <property type="protein sequence ID" value="AAO44502.1"/>
    <property type="status" value="ALT_INIT"/>
    <property type="molecule type" value="Genomic_DNA"/>
</dbReference>
<dbReference type="SMR" id="Q83GA8"/>
<dbReference type="STRING" id="203267.TWT_405"/>
<dbReference type="KEGG" id="twh:TWT_405"/>
<dbReference type="eggNOG" id="COG0171">
    <property type="taxonomic scope" value="Bacteria"/>
</dbReference>
<dbReference type="HOGENOM" id="CLU_059327_3_0_11"/>
<dbReference type="UniPathway" id="UPA00253">
    <property type="reaction ID" value="UER00333"/>
</dbReference>
<dbReference type="Proteomes" id="UP000002200">
    <property type="component" value="Chromosome"/>
</dbReference>
<dbReference type="GO" id="GO:0005737">
    <property type="term" value="C:cytoplasm"/>
    <property type="evidence" value="ECO:0007669"/>
    <property type="project" value="InterPro"/>
</dbReference>
<dbReference type="GO" id="GO:0005524">
    <property type="term" value="F:ATP binding"/>
    <property type="evidence" value="ECO:0007669"/>
    <property type="project" value="UniProtKB-UniRule"/>
</dbReference>
<dbReference type="GO" id="GO:0004359">
    <property type="term" value="F:glutaminase activity"/>
    <property type="evidence" value="ECO:0007669"/>
    <property type="project" value="InterPro"/>
</dbReference>
<dbReference type="GO" id="GO:0046872">
    <property type="term" value="F:metal ion binding"/>
    <property type="evidence" value="ECO:0007669"/>
    <property type="project" value="UniProtKB-KW"/>
</dbReference>
<dbReference type="GO" id="GO:0003952">
    <property type="term" value="F:NAD+ synthase (glutamine-hydrolyzing) activity"/>
    <property type="evidence" value="ECO:0007669"/>
    <property type="project" value="InterPro"/>
</dbReference>
<dbReference type="GO" id="GO:0008795">
    <property type="term" value="F:NAD+ synthase activity"/>
    <property type="evidence" value="ECO:0007669"/>
    <property type="project" value="UniProtKB-UniRule"/>
</dbReference>
<dbReference type="GO" id="GO:0009435">
    <property type="term" value="P:NAD biosynthetic process"/>
    <property type="evidence" value="ECO:0007669"/>
    <property type="project" value="UniProtKB-UniRule"/>
</dbReference>
<dbReference type="CDD" id="cd00553">
    <property type="entry name" value="NAD_synthase"/>
    <property type="match status" value="1"/>
</dbReference>
<dbReference type="Gene3D" id="3.40.50.620">
    <property type="entry name" value="HUPs"/>
    <property type="match status" value="1"/>
</dbReference>
<dbReference type="HAMAP" id="MF_00193">
    <property type="entry name" value="NadE_ammonia_dep"/>
    <property type="match status" value="1"/>
</dbReference>
<dbReference type="InterPro" id="IPR022310">
    <property type="entry name" value="NAD/GMP_synthase"/>
</dbReference>
<dbReference type="InterPro" id="IPR003694">
    <property type="entry name" value="NAD_synthase"/>
</dbReference>
<dbReference type="InterPro" id="IPR022926">
    <property type="entry name" value="NH(3)-dep_NAD(+)_synth"/>
</dbReference>
<dbReference type="InterPro" id="IPR014729">
    <property type="entry name" value="Rossmann-like_a/b/a_fold"/>
</dbReference>
<dbReference type="NCBIfam" id="TIGR00552">
    <property type="entry name" value="nadE"/>
    <property type="match status" value="1"/>
</dbReference>
<dbReference type="NCBIfam" id="NF001979">
    <property type="entry name" value="PRK00768.1"/>
    <property type="match status" value="1"/>
</dbReference>
<dbReference type="PANTHER" id="PTHR23090">
    <property type="entry name" value="NH 3 /GLUTAMINE-DEPENDENT NAD + SYNTHETASE"/>
    <property type="match status" value="1"/>
</dbReference>
<dbReference type="PANTHER" id="PTHR23090:SF7">
    <property type="entry name" value="NH(3)-DEPENDENT NAD(+) SYNTHETASE"/>
    <property type="match status" value="1"/>
</dbReference>
<dbReference type="Pfam" id="PF02540">
    <property type="entry name" value="NAD_synthase"/>
    <property type="match status" value="1"/>
</dbReference>
<dbReference type="SUPFAM" id="SSF52402">
    <property type="entry name" value="Adenine nucleotide alpha hydrolases-like"/>
    <property type="match status" value="1"/>
</dbReference>
<sequence length="271" mass="29841">MCCDISKTLCVKPFIDPEEEISHRVSFLADYLRHSRASGYVLGISGGQDSALAGRLCQIAVESVRSIGFDATLWAIRLPYGQQFDESDAQTAMQFISPDEELSFDIRSATDNLCVDLNRSLGSKISDFNRGNIKARLRMVVQYAVAAHHDALVVGTDHAAEAVTGFFTKFGDGAADILPLYGLTKGQGRALLKALGACDSIIEKVPTADLLDDLPCLPDETELGLQYRDIDAFLEGKPVSEDITMAITERYKSTLHKRMPPITPHSTWWRK</sequence>
<proteinExistence type="inferred from homology"/>
<keyword id="KW-0067">ATP-binding</keyword>
<keyword id="KW-0436">Ligase</keyword>
<keyword id="KW-0460">Magnesium</keyword>
<keyword id="KW-0479">Metal-binding</keyword>
<keyword id="KW-0520">NAD</keyword>
<keyword id="KW-0547">Nucleotide-binding</keyword>
<keyword id="KW-1185">Reference proteome</keyword>
<accession>Q83GA8</accession>
<feature type="chain" id="PRO_0000152214" description="NH(3)-dependent NAD(+) synthetase">
    <location>
        <begin position="1"/>
        <end position="271"/>
    </location>
</feature>
<feature type="binding site" evidence="1">
    <location>
        <begin position="43"/>
        <end position="50"/>
    </location>
    <ligand>
        <name>ATP</name>
        <dbReference type="ChEBI" id="CHEBI:30616"/>
    </ligand>
</feature>
<feature type="binding site" evidence="1">
    <location>
        <position position="49"/>
    </location>
    <ligand>
        <name>Mg(2+)</name>
        <dbReference type="ChEBI" id="CHEBI:18420"/>
    </ligand>
</feature>
<feature type="binding site" evidence="1">
    <location>
        <position position="136"/>
    </location>
    <ligand>
        <name>deamido-NAD(+)</name>
        <dbReference type="ChEBI" id="CHEBI:58437"/>
    </ligand>
</feature>
<feature type="binding site" evidence="1">
    <location>
        <position position="156"/>
    </location>
    <ligand>
        <name>ATP</name>
        <dbReference type="ChEBI" id="CHEBI:30616"/>
    </ligand>
</feature>
<feature type="binding site" evidence="1">
    <location>
        <position position="161"/>
    </location>
    <ligand>
        <name>Mg(2+)</name>
        <dbReference type="ChEBI" id="CHEBI:18420"/>
    </ligand>
</feature>
<feature type="binding site" evidence="1">
    <location>
        <position position="169"/>
    </location>
    <ligand>
        <name>deamido-NAD(+)</name>
        <dbReference type="ChEBI" id="CHEBI:58437"/>
    </ligand>
</feature>
<feature type="binding site" evidence="1">
    <location>
        <position position="176"/>
    </location>
    <ligand>
        <name>deamido-NAD(+)</name>
        <dbReference type="ChEBI" id="CHEBI:58437"/>
    </ligand>
</feature>
<feature type="binding site" evidence="1">
    <location>
        <position position="185"/>
    </location>
    <ligand>
        <name>ATP</name>
        <dbReference type="ChEBI" id="CHEBI:30616"/>
    </ligand>
</feature>
<feature type="binding site" evidence="1">
    <location>
        <position position="207"/>
    </location>
    <ligand>
        <name>ATP</name>
        <dbReference type="ChEBI" id="CHEBI:30616"/>
    </ligand>
</feature>
<feature type="binding site" evidence="1">
    <location>
        <begin position="256"/>
        <end position="257"/>
    </location>
    <ligand>
        <name>deamido-NAD(+)</name>
        <dbReference type="ChEBI" id="CHEBI:58437"/>
    </ligand>
</feature>